<accession>Q1IXU8</accession>
<organism>
    <name type="scientific">Deinococcus geothermalis (strain DSM 11300 / CIP 105573 / AG-3a)</name>
    <dbReference type="NCBI Taxonomy" id="319795"/>
    <lineage>
        <taxon>Bacteria</taxon>
        <taxon>Thermotogati</taxon>
        <taxon>Deinococcota</taxon>
        <taxon>Deinococci</taxon>
        <taxon>Deinococcales</taxon>
        <taxon>Deinococcaceae</taxon>
        <taxon>Deinococcus</taxon>
    </lineage>
</organism>
<evidence type="ECO:0000255" key="1">
    <source>
        <dbReference type="HAMAP-Rule" id="MF_00658"/>
    </source>
</evidence>
<keyword id="KW-0963">Cytoplasm</keyword>
<keyword id="KW-0489">Methyltransferase</keyword>
<keyword id="KW-0698">rRNA processing</keyword>
<keyword id="KW-0949">S-adenosyl-L-methionine</keyword>
<keyword id="KW-0808">Transferase</keyword>
<dbReference type="EC" id="2.1.1.177" evidence="1"/>
<dbReference type="EMBL" id="CP000359">
    <property type="protein sequence ID" value="ABF45936.1"/>
    <property type="molecule type" value="Genomic_DNA"/>
</dbReference>
<dbReference type="RefSeq" id="WP_011530770.1">
    <property type="nucleotide sequence ID" value="NC_008025.1"/>
</dbReference>
<dbReference type="SMR" id="Q1IXU8"/>
<dbReference type="STRING" id="319795.Dgeo_1641"/>
<dbReference type="KEGG" id="dge:Dgeo_1641"/>
<dbReference type="eggNOG" id="COG1576">
    <property type="taxonomic scope" value="Bacteria"/>
</dbReference>
<dbReference type="HOGENOM" id="CLU_100552_1_0_0"/>
<dbReference type="Proteomes" id="UP000002431">
    <property type="component" value="Chromosome"/>
</dbReference>
<dbReference type="GO" id="GO:0005737">
    <property type="term" value="C:cytoplasm"/>
    <property type="evidence" value="ECO:0007669"/>
    <property type="project" value="UniProtKB-SubCell"/>
</dbReference>
<dbReference type="GO" id="GO:0070038">
    <property type="term" value="F:rRNA (pseudouridine-N3-)-methyltransferase activity"/>
    <property type="evidence" value="ECO:0007669"/>
    <property type="project" value="UniProtKB-UniRule"/>
</dbReference>
<dbReference type="CDD" id="cd18081">
    <property type="entry name" value="RlmH-like"/>
    <property type="match status" value="1"/>
</dbReference>
<dbReference type="Gene3D" id="3.40.1280.10">
    <property type="match status" value="1"/>
</dbReference>
<dbReference type="HAMAP" id="MF_00658">
    <property type="entry name" value="23SrRNA_methyltr_H"/>
    <property type="match status" value="1"/>
</dbReference>
<dbReference type="InterPro" id="IPR029028">
    <property type="entry name" value="Alpha/beta_knot_MTases"/>
</dbReference>
<dbReference type="InterPro" id="IPR003742">
    <property type="entry name" value="RlmH-like"/>
</dbReference>
<dbReference type="InterPro" id="IPR029026">
    <property type="entry name" value="tRNA_m1G_MTases_N"/>
</dbReference>
<dbReference type="PANTHER" id="PTHR33603">
    <property type="entry name" value="METHYLTRANSFERASE"/>
    <property type="match status" value="1"/>
</dbReference>
<dbReference type="PANTHER" id="PTHR33603:SF1">
    <property type="entry name" value="RIBOSOMAL RNA LARGE SUBUNIT METHYLTRANSFERASE H"/>
    <property type="match status" value="1"/>
</dbReference>
<dbReference type="Pfam" id="PF02590">
    <property type="entry name" value="SPOUT_MTase"/>
    <property type="match status" value="1"/>
</dbReference>
<dbReference type="PIRSF" id="PIRSF004505">
    <property type="entry name" value="MT_bac"/>
    <property type="match status" value="1"/>
</dbReference>
<dbReference type="SUPFAM" id="SSF75217">
    <property type="entry name" value="alpha/beta knot"/>
    <property type="match status" value="1"/>
</dbReference>
<sequence>MRLHLITVGEPKLAYARAGWDEYEKRLRRYHKVQVTRVGGRTGAQASEAIARAAGRAPLILLDPRGEQFTSESLSAYLDAQALDGRGELAFAVGGPEGHTDDLRARAHRLWSLSLLTLPHDLAMILLLEALYRAATISAGEPYHRGST</sequence>
<reference key="1">
    <citation type="submission" date="2006-04" db="EMBL/GenBank/DDBJ databases">
        <title>Complete sequence of chromosome of Deinococcus geothermalis DSM 11300.</title>
        <authorList>
            <person name="Copeland A."/>
            <person name="Lucas S."/>
            <person name="Lapidus A."/>
            <person name="Barry K."/>
            <person name="Detter J.C."/>
            <person name="Glavina del Rio T."/>
            <person name="Hammon N."/>
            <person name="Israni S."/>
            <person name="Dalin E."/>
            <person name="Tice H."/>
            <person name="Pitluck S."/>
            <person name="Brettin T."/>
            <person name="Bruce D."/>
            <person name="Han C."/>
            <person name="Tapia R."/>
            <person name="Saunders E."/>
            <person name="Gilna P."/>
            <person name="Schmutz J."/>
            <person name="Larimer F."/>
            <person name="Land M."/>
            <person name="Hauser L."/>
            <person name="Kyrpides N."/>
            <person name="Kim E."/>
            <person name="Daly M.J."/>
            <person name="Fredrickson J.K."/>
            <person name="Makarova K.S."/>
            <person name="Gaidamakova E.K."/>
            <person name="Zhai M."/>
            <person name="Richardson P."/>
        </authorList>
    </citation>
    <scope>NUCLEOTIDE SEQUENCE [LARGE SCALE GENOMIC DNA]</scope>
    <source>
        <strain>DSM 11300 / CIP 105573 / AG-3a</strain>
    </source>
</reference>
<gene>
    <name evidence="1" type="primary">rlmH</name>
    <name type="ordered locus">Dgeo_1641</name>
</gene>
<name>RLMH_DEIGD</name>
<protein>
    <recommendedName>
        <fullName evidence="1">Ribosomal RNA large subunit methyltransferase H</fullName>
        <ecNumber evidence="1">2.1.1.177</ecNumber>
    </recommendedName>
    <alternativeName>
        <fullName evidence="1">23S rRNA (pseudouridine1915-N3)-methyltransferase</fullName>
    </alternativeName>
    <alternativeName>
        <fullName evidence="1">23S rRNA m3Psi1915 methyltransferase</fullName>
    </alternativeName>
    <alternativeName>
        <fullName evidence="1">rRNA (pseudouridine-N3-)-methyltransferase RlmH</fullName>
    </alternativeName>
</protein>
<comment type="function">
    <text evidence="1">Specifically methylates the pseudouridine at position 1915 (m3Psi1915) in 23S rRNA.</text>
</comment>
<comment type="catalytic activity">
    <reaction evidence="1">
        <text>pseudouridine(1915) in 23S rRNA + S-adenosyl-L-methionine = N(3)-methylpseudouridine(1915) in 23S rRNA + S-adenosyl-L-homocysteine + H(+)</text>
        <dbReference type="Rhea" id="RHEA:42752"/>
        <dbReference type="Rhea" id="RHEA-COMP:10221"/>
        <dbReference type="Rhea" id="RHEA-COMP:10222"/>
        <dbReference type="ChEBI" id="CHEBI:15378"/>
        <dbReference type="ChEBI" id="CHEBI:57856"/>
        <dbReference type="ChEBI" id="CHEBI:59789"/>
        <dbReference type="ChEBI" id="CHEBI:65314"/>
        <dbReference type="ChEBI" id="CHEBI:74486"/>
        <dbReference type="EC" id="2.1.1.177"/>
    </reaction>
</comment>
<comment type="subunit">
    <text evidence="1">Homodimer.</text>
</comment>
<comment type="subcellular location">
    <subcellularLocation>
        <location evidence="1">Cytoplasm</location>
    </subcellularLocation>
</comment>
<comment type="similarity">
    <text evidence="1">Belongs to the RNA methyltransferase RlmH family.</text>
</comment>
<feature type="chain" id="PRO_0000260551" description="Ribosomal RNA large subunit methyltransferase H">
    <location>
        <begin position="1"/>
        <end position="148"/>
    </location>
</feature>
<feature type="binding site" evidence="1">
    <location>
        <position position="62"/>
    </location>
    <ligand>
        <name>S-adenosyl-L-methionine</name>
        <dbReference type="ChEBI" id="CHEBI:59789"/>
    </ligand>
</feature>
<feature type="binding site" evidence="1">
    <location>
        <position position="94"/>
    </location>
    <ligand>
        <name>S-adenosyl-L-methionine</name>
        <dbReference type="ChEBI" id="CHEBI:59789"/>
    </ligand>
</feature>
<feature type="binding site" evidence="1">
    <location>
        <begin position="113"/>
        <end position="118"/>
    </location>
    <ligand>
        <name>S-adenosyl-L-methionine</name>
        <dbReference type="ChEBI" id="CHEBI:59789"/>
    </ligand>
</feature>
<proteinExistence type="inferred from homology"/>